<sequence>MARVKRGVIARARHKKILKQAKGYYGARSRVYRVAFQAVIKAGQYAYRDRRQRKRQFRQLWIARINAAARQNGLSYSRFINGLKKASVEIDRKILADIAVFDKVAFSALVEKAKAALA</sequence>
<proteinExistence type="inferred from homology"/>
<protein>
    <recommendedName>
        <fullName evidence="1">Large ribosomal subunit protein bL20</fullName>
    </recommendedName>
    <alternativeName>
        <fullName evidence="2">50S ribosomal protein L20</fullName>
    </alternativeName>
</protein>
<gene>
    <name evidence="1" type="primary">rplT</name>
    <name type="ordered locus">YpsIP31758_1715</name>
</gene>
<evidence type="ECO:0000255" key="1">
    <source>
        <dbReference type="HAMAP-Rule" id="MF_00382"/>
    </source>
</evidence>
<evidence type="ECO:0000305" key="2"/>
<feature type="chain" id="PRO_1000060694" description="Large ribosomal subunit protein bL20">
    <location>
        <begin position="1"/>
        <end position="118"/>
    </location>
</feature>
<reference key="1">
    <citation type="journal article" date="2007" name="PLoS Genet.">
        <title>The complete genome sequence of Yersinia pseudotuberculosis IP31758, the causative agent of Far East scarlet-like fever.</title>
        <authorList>
            <person name="Eppinger M."/>
            <person name="Rosovitz M.J."/>
            <person name="Fricke W.F."/>
            <person name="Rasko D.A."/>
            <person name="Kokorina G."/>
            <person name="Fayolle C."/>
            <person name="Lindler L.E."/>
            <person name="Carniel E."/>
            <person name="Ravel J."/>
        </authorList>
    </citation>
    <scope>NUCLEOTIDE SEQUENCE [LARGE SCALE GENOMIC DNA]</scope>
    <source>
        <strain>IP 31758</strain>
    </source>
</reference>
<dbReference type="EMBL" id="CP000720">
    <property type="protein sequence ID" value="ABS46061.1"/>
    <property type="molecule type" value="Genomic_DNA"/>
</dbReference>
<dbReference type="RefSeq" id="WP_002211833.1">
    <property type="nucleotide sequence ID" value="NC_009708.1"/>
</dbReference>
<dbReference type="SMR" id="A7FHG4"/>
<dbReference type="GeneID" id="96665819"/>
<dbReference type="KEGG" id="ypi:YpsIP31758_1715"/>
<dbReference type="HOGENOM" id="CLU_123265_0_1_6"/>
<dbReference type="Proteomes" id="UP000002412">
    <property type="component" value="Chromosome"/>
</dbReference>
<dbReference type="GO" id="GO:1990904">
    <property type="term" value="C:ribonucleoprotein complex"/>
    <property type="evidence" value="ECO:0007669"/>
    <property type="project" value="UniProtKB-KW"/>
</dbReference>
<dbReference type="GO" id="GO:0005840">
    <property type="term" value="C:ribosome"/>
    <property type="evidence" value="ECO:0007669"/>
    <property type="project" value="UniProtKB-KW"/>
</dbReference>
<dbReference type="GO" id="GO:0019843">
    <property type="term" value="F:rRNA binding"/>
    <property type="evidence" value="ECO:0007669"/>
    <property type="project" value="UniProtKB-UniRule"/>
</dbReference>
<dbReference type="GO" id="GO:0003735">
    <property type="term" value="F:structural constituent of ribosome"/>
    <property type="evidence" value="ECO:0007669"/>
    <property type="project" value="InterPro"/>
</dbReference>
<dbReference type="GO" id="GO:0000027">
    <property type="term" value="P:ribosomal large subunit assembly"/>
    <property type="evidence" value="ECO:0007669"/>
    <property type="project" value="UniProtKB-UniRule"/>
</dbReference>
<dbReference type="GO" id="GO:0006412">
    <property type="term" value="P:translation"/>
    <property type="evidence" value="ECO:0007669"/>
    <property type="project" value="InterPro"/>
</dbReference>
<dbReference type="CDD" id="cd07026">
    <property type="entry name" value="Ribosomal_L20"/>
    <property type="match status" value="1"/>
</dbReference>
<dbReference type="FunFam" id="1.10.1900.20:FF:000001">
    <property type="entry name" value="50S ribosomal protein L20"/>
    <property type="match status" value="1"/>
</dbReference>
<dbReference type="Gene3D" id="6.10.160.10">
    <property type="match status" value="1"/>
</dbReference>
<dbReference type="Gene3D" id="1.10.1900.20">
    <property type="entry name" value="Ribosomal protein L20"/>
    <property type="match status" value="1"/>
</dbReference>
<dbReference type="HAMAP" id="MF_00382">
    <property type="entry name" value="Ribosomal_bL20"/>
    <property type="match status" value="1"/>
</dbReference>
<dbReference type="InterPro" id="IPR005813">
    <property type="entry name" value="Ribosomal_bL20"/>
</dbReference>
<dbReference type="InterPro" id="IPR049946">
    <property type="entry name" value="RIBOSOMAL_L20_CS"/>
</dbReference>
<dbReference type="InterPro" id="IPR035566">
    <property type="entry name" value="Ribosomal_protein_bL20_C"/>
</dbReference>
<dbReference type="NCBIfam" id="TIGR01032">
    <property type="entry name" value="rplT_bact"/>
    <property type="match status" value="1"/>
</dbReference>
<dbReference type="PANTHER" id="PTHR10986">
    <property type="entry name" value="39S RIBOSOMAL PROTEIN L20"/>
    <property type="match status" value="1"/>
</dbReference>
<dbReference type="Pfam" id="PF00453">
    <property type="entry name" value="Ribosomal_L20"/>
    <property type="match status" value="1"/>
</dbReference>
<dbReference type="PRINTS" id="PR00062">
    <property type="entry name" value="RIBOSOMALL20"/>
</dbReference>
<dbReference type="SUPFAM" id="SSF74731">
    <property type="entry name" value="Ribosomal protein L20"/>
    <property type="match status" value="1"/>
</dbReference>
<dbReference type="PROSITE" id="PS00937">
    <property type="entry name" value="RIBOSOMAL_L20"/>
    <property type="match status" value="1"/>
</dbReference>
<accession>A7FHG4</accession>
<keyword id="KW-0687">Ribonucleoprotein</keyword>
<keyword id="KW-0689">Ribosomal protein</keyword>
<keyword id="KW-0694">RNA-binding</keyword>
<keyword id="KW-0699">rRNA-binding</keyword>
<name>RL20_YERP3</name>
<organism>
    <name type="scientific">Yersinia pseudotuberculosis serotype O:1b (strain IP 31758)</name>
    <dbReference type="NCBI Taxonomy" id="349747"/>
    <lineage>
        <taxon>Bacteria</taxon>
        <taxon>Pseudomonadati</taxon>
        <taxon>Pseudomonadota</taxon>
        <taxon>Gammaproteobacteria</taxon>
        <taxon>Enterobacterales</taxon>
        <taxon>Yersiniaceae</taxon>
        <taxon>Yersinia</taxon>
    </lineage>
</organism>
<comment type="function">
    <text evidence="1">Binds directly to 23S ribosomal RNA and is necessary for the in vitro assembly process of the 50S ribosomal subunit. It is not involved in the protein synthesizing functions of that subunit.</text>
</comment>
<comment type="similarity">
    <text evidence="1">Belongs to the bacterial ribosomal protein bL20 family.</text>
</comment>